<evidence type="ECO:0000255" key="1">
    <source>
        <dbReference type="HAMAP-Rule" id="MF_00397"/>
    </source>
</evidence>
<comment type="function">
    <text evidence="1">Catalyzes the formation of 2-(5''-triphosphoribosyl)-3'-dephosphocoenzyme-A, the precursor of the prosthetic group of the holo-acyl carrier protein (gamma chain) of citrate lyase, from ATP and dephospho-CoA.</text>
</comment>
<comment type="catalytic activity">
    <reaction evidence="1">
        <text>3'-dephospho-CoA + ATP = 2'-(5''-triphospho-alpha-D-ribosyl)-3'-dephospho-CoA + adenine</text>
        <dbReference type="Rhea" id="RHEA:15117"/>
        <dbReference type="ChEBI" id="CHEBI:16708"/>
        <dbReference type="ChEBI" id="CHEBI:30616"/>
        <dbReference type="ChEBI" id="CHEBI:57328"/>
        <dbReference type="ChEBI" id="CHEBI:61378"/>
        <dbReference type="EC" id="2.4.2.52"/>
    </reaction>
</comment>
<comment type="similarity">
    <text evidence="1">Belongs to the CitG/MdcB family.</text>
</comment>
<dbReference type="EC" id="2.4.2.52" evidence="1"/>
<dbReference type="EMBL" id="CU928160">
    <property type="protein sequence ID" value="CAQ97467.1"/>
    <property type="molecule type" value="Genomic_DNA"/>
</dbReference>
<dbReference type="RefSeq" id="WP_000062457.1">
    <property type="nucleotide sequence ID" value="NC_011741.1"/>
</dbReference>
<dbReference type="KEGG" id="ecr:ECIAI1_0597"/>
<dbReference type="HOGENOM" id="CLU_056179_1_0_6"/>
<dbReference type="GO" id="GO:0005524">
    <property type="term" value="F:ATP binding"/>
    <property type="evidence" value="ECO:0007669"/>
    <property type="project" value="UniProtKB-KW"/>
</dbReference>
<dbReference type="GO" id="GO:0046917">
    <property type="term" value="F:triphosphoribosyl-dephospho-CoA synthase activity"/>
    <property type="evidence" value="ECO:0007669"/>
    <property type="project" value="UniProtKB-UniRule"/>
</dbReference>
<dbReference type="GO" id="GO:0051191">
    <property type="term" value="P:prosthetic group biosynthetic process"/>
    <property type="evidence" value="ECO:0007669"/>
    <property type="project" value="TreeGrafter"/>
</dbReference>
<dbReference type="FunFam" id="1.10.4200.10:FF:000001">
    <property type="entry name" value="Triphosphoribosyl-dephospho-CoA synthase CitG"/>
    <property type="match status" value="1"/>
</dbReference>
<dbReference type="Gene3D" id="1.10.4200.10">
    <property type="entry name" value="Triphosphoribosyl-dephospho-CoA protein"/>
    <property type="match status" value="1"/>
</dbReference>
<dbReference type="HAMAP" id="MF_00397">
    <property type="entry name" value="CitG"/>
    <property type="match status" value="1"/>
</dbReference>
<dbReference type="InterPro" id="IPR002736">
    <property type="entry name" value="CitG"/>
</dbReference>
<dbReference type="InterPro" id="IPR017551">
    <property type="entry name" value="TriPribosyl-deP-CoA_syn_CitG"/>
</dbReference>
<dbReference type="NCBIfam" id="TIGR03125">
    <property type="entry name" value="citrate_citG"/>
    <property type="match status" value="1"/>
</dbReference>
<dbReference type="NCBIfam" id="NF007503">
    <property type="entry name" value="PRK10096.1"/>
    <property type="match status" value="1"/>
</dbReference>
<dbReference type="PANTHER" id="PTHR30201:SF2">
    <property type="entry name" value="2-(5''-TRIPHOSPHORIBOSYL)-3'-DEPHOSPHOCOENZYME-A SYNTHASE"/>
    <property type="match status" value="1"/>
</dbReference>
<dbReference type="PANTHER" id="PTHR30201">
    <property type="entry name" value="TRIPHOSPHORIBOSYL-DEPHOSPHO-COA SYNTHASE"/>
    <property type="match status" value="1"/>
</dbReference>
<dbReference type="Pfam" id="PF01874">
    <property type="entry name" value="CitG"/>
    <property type="match status" value="1"/>
</dbReference>
<sequence>MSMPATSTKTTKLATSLIDEYALLGWRAMLTEVNLSPKPGLVDRINCGAHKDMALEDFHRSALAIQGWLPRFIEFGACSAEMAPEAVLHGLRPIGMACEGDMFRATAGVNTHKGSIFSLGLLCAAIGRLLQLNQPVTPTTVCSTAASFCRGLTDRELRTNNSQLTAGQRLYQQLGLTGARGEAEAGYPLVINHALPHYLTLLDQGLDPELALLDTLLLLMAINGDTNVASRGGEGGLRWLQREAQTLLQKGGIRTPADLDYLRQFDRECIERNLSPGGSADLLILTWFLAQI</sequence>
<keyword id="KW-0067">ATP-binding</keyword>
<keyword id="KW-0547">Nucleotide-binding</keyword>
<keyword id="KW-0808">Transferase</keyword>
<protein>
    <recommendedName>
        <fullName evidence="1">2-(5''-triphosphoribosyl)-3'-dephosphocoenzyme-A synthase</fullName>
        <shortName evidence="1">2-(5''-triphosphoribosyl)-3'-dephospho-CoA synthase</shortName>
        <ecNumber evidence="1">2.4.2.52</ecNumber>
    </recommendedName>
</protein>
<reference key="1">
    <citation type="journal article" date="2009" name="PLoS Genet.">
        <title>Organised genome dynamics in the Escherichia coli species results in highly diverse adaptive paths.</title>
        <authorList>
            <person name="Touchon M."/>
            <person name="Hoede C."/>
            <person name="Tenaillon O."/>
            <person name="Barbe V."/>
            <person name="Baeriswyl S."/>
            <person name="Bidet P."/>
            <person name="Bingen E."/>
            <person name="Bonacorsi S."/>
            <person name="Bouchier C."/>
            <person name="Bouvet O."/>
            <person name="Calteau A."/>
            <person name="Chiapello H."/>
            <person name="Clermont O."/>
            <person name="Cruveiller S."/>
            <person name="Danchin A."/>
            <person name="Diard M."/>
            <person name="Dossat C."/>
            <person name="Karoui M.E."/>
            <person name="Frapy E."/>
            <person name="Garry L."/>
            <person name="Ghigo J.M."/>
            <person name="Gilles A.M."/>
            <person name="Johnson J."/>
            <person name="Le Bouguenec C."/>
            <person name="Lescat M."/>
            <person name="Mangenot S."/>
            <person name="Martinez-Jehanne V."/>
            <person name="Matic I."/>
            <person name="Nassif X."/>
            <person name="Oztas S."/>
            <person name="Petit M.A."/>
            <person name="Pichon C."/>
            <person name="Rouy Z."/>
            <person name="Ruf C.S."/>
            <person name="Schneider D."/>
            <person name="Tourret J."/>
            <person name="Vacherie B."/>
            <person name="Vallenet D."/>
            <person name="Medigue C."/>
            <person name="Rocha E.P.C."/>
            <person name="Denamur E."/>
        </authorList>
    </citation>
    <scope>NUCLEOTIDE SEQUENCE [LARGE SCALE GENOMIC DNA]</scope>
    <source>
        <strain>IAI1</strain>
    </source>
</reference>
<accession>B7M4U5</accession>
<gene>
    <name evidence="1" type="primary">citG</name>
    <name type="ordered locus">ECIAI1_0597</name>
</gene>
<proteinExistence type="inferred from homology"/>
<feature type="chain" id="PRO_1000123221" description="2-(5''-triphosphoribosyl)-3'-dephosphocoenzyme-A synthase">
    <location>
        <begin position="1"/>
        <end position="292"/>
    </location>
</feature>
<name>CITG_ECO8A</name>
<organism>
    <name type="scientific">Escherichia coli O8 (strain IAI1)</name>
    <dbReference type="NCBI Taxonomy" id="585034"/>
    <lineage>
        <taxon>Bacteria</taxon>
        <taxon>Pseudomonadati</taxon>
        <taxon>Pseudomonadota</taxon>
        <taxon>Gammaproteobacteria</taxon>
        <taxon>Enterobacterales</taxon>
        <taxon>Enterobacteriaceae</taxon>
        <taxon>Escherichia</taxon>
    </lineage>
</organism>